<reference key="1">
    <citation type="journal article" date="2003" name="Genome Res.">
        <title>Comparative complete genome sequence analysis of the amino acid replacements responsible for the thermostability of Corynebacterium efficiens.</title>
        <authorList>
            <person name="Nishio Y."/>
            <person name="Nakamura Y."/>
            <person name="Kawarabayasi Y."/>
            <person name="Usuda Y."/>
            <person name="Kimura E."/>
            <person name="Sugimoto S."/>
            <person name="Matsui K."/>
            <person name="Yamagishi A."/>
            <person name="Kikuchi H."/>
            <person name="Ikeo K."/>
            <person name="Gojobori T."/>
        </authorList>
    </citation>
    <scope>NUCLEOTIDE SEQUENCE [LARGE SCALE GENOMIC DNA]</scope>
    <source>
        <strain>DSM 44549 / YS-314 / AJ 12310 / JCM 11189 / NBRC 100395</strain>
    </source>
</reference>
<proteinExistence type="inferred from homology"/>
<protein>
    <recommendedName>
        <fullName evidence="1">UDP-N-acetylmuramate--L-alanine ligase</fullName>
        <ecNumber evidence="1">6.3.2.8</ecNumber>
    </recommendedName>
    <alternativeName>
        <fullName evidence="1">UDP-N-acetylmuramoyl-L-alanine synthetase</fullName>
    </alternativeName>
</protein>
<comment type="function">
    <text evidence="1">Cell wall formation.</text>
</comment>
<comment type="catalytic activity">
    <reaction evidence="1">
        <text>UDP-N-acetyl-alpha-D-muramate + L-alanine + ATP = UDP-N-acetyl-alpha-D-muramoyl-L-alanine + ADP + phosphate + H(+)</text>
        <dbReference type="Rhea" id="RHEA:23372"/>
        <dbReference type="ChEBI" id="CHEBI:15378"/>
        <dbReference type="ChEBI" id="CHEBI:30616"/>
        <dbReference type="ChEBI" id="CHEBI:43474"/>
        <dbReference type="ChEBI" id="CHEBI:57972"/>
        <dbReference type="ChEBI" id="CHEBI:70757"/>
        <dbReference type="ChEBI" id="CHEBI:83898"/>
        <dbReference type="ChEBI" id="CHEBI:456216"/>
        <dbReference type="EC" id="6.3.2.8"/>
    </reaction>
</comment>
<comment type="pathway">
    <text evidence="1">Cell wall biogenesis; peptidoglycan biosynthesis.</text>
</comment>
<comment type="subcellular location">
    <subcellularLocation>
        <location evidence="1">Cytoplasm</location>
    </subcellularLocation>
</comment>
<comment type="similarity">
    <text evidence="1">Belongs to the MurCDEF family.</text>
</comment>
<feature type="chain" id="PRO_0000182083" description="UDP-N-acetylmuramate--L-alanine ligase">
    <location>
        <begin position="1"/>
        <end position="489"/>
    </location>
</feature>
<feature type="binding site" evidence="1">
    <location>
        <begin position="130"/>
        <end position="136"/>
    </location>
    <ligand>
        <name>ATP</name>
        <dbReference type="ChEBI" id="CHEBI:30616"/>
    </ligand>
</feature>
<organism>
    <name type="scientific">Corynebacterium efficiens (strain DSM 44549 / YS-314 / AJ 12310 / JCM 11189 / NBRC 100395)</name>
    <dbReference type="NCBI Taxonomy" id="196164"/>
    <lineage>
        <taxon>Bacteria</taxon>
        <taxon>Bacillati</taxon>
        <taxon>Actinomycetota</taxon>
        <taxon>Actinomycetes</taxon>
        <taxon>Mycobacteriales</taxon>
        <taxon>Corynebacteriaceae</taxon>
        <taxon>Corynebacterium</taxon>
    </lineage>
</organism>
<gene>
    <name evidence="1" type="primary">murC</name>
    <name type="ordered locus">CE2052</name>
</gene>
<evidence type="ECO:0000255" key="1">
    <source>
        <dbReference type="HAMAP-Rule" id="MF_00046"/>
    </source>
</evidence>
<name>MURC_COREF</name>
<sequence length="489" mass="51489">MRTDQVPNTTSEHPAIDLSRVHLIGIGGAGMSGVARILLARGKTVTGSDAKDSRTLLPLRAVGAKIAVGHAAENLELAGELPTVVVTSFAAIPQDNPELVRAREENIPVIRRSDLLGELLEGHRQVLIAGTHGKTSTTSMAVVALQAAGMDPSFAIGGQLNKAGTNAHQGTGEAFVAEADESDASLLRYTPEIAVVTNIEPDHLDFFKTPEAYFQVFEDFADRLTPGGTLVVCLDDPGAAALGERAVARGINAVGYGTVDAVAAHPTVPVKATILSSRVVAEGTYAVLDIDGREVEIILQIPGNHMVLNGAAALLSGYLLGADLDKLAAGLSDFSGVRRRFEYHGTVRGGQFDGASVYDDYAHHPTEVEAVLKAARERVDAAGEGRVIVAFQPHLYSRTLEFAREFAGALSLADAAVLLEIFGAREKPVEGVTSRVITDEMTIPVSYEPNFSAVPDRIAEIAGPADIVLTMGAGSVTMLAPEILDRLRG</sequence>
<accession>Q8FNU1</accession>
<dbReference type="EC" id="6.3.2.8" evidence="1"/>
<dbReference type="EMBL" id="BA000035">
    <property type="protein sequence ID" value="BAC18862.1"/>
    <property type="molecule type" value="Genomic_DNA"/>
</dbReference>
<dbReference type="RefSeq" id="WP_006768052.1">
    <property type="nucleotide sequence ID" value="NC_004369.1"/>
</dbReference>
<dbReference type="SMR" id="Q8FNU1"/>
<dbReference type="STRING" id="196164.gene:10742480"/>
<dbReference type="KEGG" id="cef:CE2052"/>
<dbReference type="eggNOG" id="COG0773">
    <property type="taxonomic scope" value="Bacteria"/>
</dbReference>
<dbReference type="HOGENOM" id="CLU_028104_2_2_11"/>
<dbReference type="OrthoDB" id="9804126at2"/>
<dbReference type="UniPathway" id="UPA00219"/>
<dbReference type="Proteomes" id="UP000001409">
    <property type="component" value="Chromosome"/>
</dbReference>
<dbReference type="GO" id="GO:0005737">
    <property type="term" value="C:cytoplasm"/>
    <property type="evidence" value="ECO:0007669"/>
    <property type="project" value="UniProtKB-SubCell"/>
</dbReference>
<dbReference type="GO" id="GO:0005524">
    <property type="term" value="F:ATP binding"/>
    <property type="evidence" value="ECO:0007669"/>
    <property type="project" value="UniProtKB-UniRule"/>
</dbReference>
<dbReference type="GO" id="GO:0008763">
    <property type="term" value="F:UDP-N-acetylmuramate-L-alanine ligase activity"/>
    <property type="evidence" value="ECO:0007669"/>
    <property type="project" value="UniProtKB-UniRule"/>
</dbReference>
<dbReference type="GO" id="GO:0051301">
    <property type="term" value="P:cell division"/>
    <property type="evidence" value="ECO:0007669"/>
    <property type="project" value="UniProtKB-KW"/>
</dbReference>
<dbReference type="GO" id="GO:0071555">
    <property type="term" value="P:cell wall organization"/>
    <property type="evidence" value="ECO:0007669"/>
    <property type="project" value="UniProtKB-KW"/>
</dbReference>
<dbReference type="GO" id="GO:0009252">
    <property type="term" value="P:peptidoglycan biosynthetic process"/>
    <property type="evidence" value="ECO:0007669"/>
    <property type="project" value="UniProtKB-UniRule"/>
</dbReference>
<dbReference type="GO" id="GO:0008360">
    <property type="term" value="P:regulation of cell shape"/>
    <property type="evidence" value="ECO:0007669"/>
    <property type="project" value="UniProtKB-KW"/>
</dbReference>
<dbReference type="Gene3D" id="3.90.190.20">
    <property type="entry name" value="Mur ligase, C-terminal domain"/>
    <property type="match status" value="1"/>
</dbReference>
<dbReference type="Gene3D" id="3.40.1190.10">
    <property type="entry name" value="Mur-like, catalytic domain"/>
    <property type="match status" value="1"/>
</dbReference>
<dbReference type="Gene3D" id="3.40.50.720">
    <property type="entry name" value="NAD(P)-binding Rossmann-like Domain"/>
    <property type="match status" value="1"/>
</dbReference>
<dbReference type="HAMAP" id="MF_00046">
    <property type="entry name" value="MurC"/>
    <property type="match status" value="1"/>
</dbReference>
<dbReference type="InterPro" id="IPR036565">
    <property type="entry name" value="Mur-like_cat_sf"/>
</dbReference>
<dbReference type="InterPro" id="IPR004101">
    <property type="entry name" value="Mur_ligase_C"/>
</dbReference>
<dbReference type="InterPro" id="IPR036615">
    <property type="entry name" value="Mur_ligase_C_dom_sf"/>
</dbReference>
<dbReference type="InterPro" id="IPR013221">
    <property type="entry name" value="Mur_ligase_cen"/>
</dbReference>
<dbReference type="InterPro" id="IPR000713">
    <property type="entry name" value="Mur_ligase_N"/>
</dbReference>
<dbReference type="InterPro" id="IPR050061">
    <property type="entry name" value="MurCDEF_pg_biosynth"/>
</dbReference>
<dbReference type="InterPro" id="IPR005758">
    <property type="entry name" value="UDP-N-AcMur_Ala_ligase_MurC"/>
</dbReference>
<dbReference type="NCBIfam" id="TIGR01082">
    <property type="entry name" value="murC"/>
    <property type="match status" value="1"/>
</dbReference>
<dbReference type="PANTHER" id="PTHR43445:SF3">
    <property type="entry name" value="UDP-N-ACETYLMURAMATE--L-ALANINE LIGASE"/>
    <property type="match status" value="1"/>
</dbReference>
<dbReference type="PANTHER" id="PTHR43445">
    <property type="entry name" value="UDP-N-ACETYLMURAMATE--L-ALANINE LIGASE-RELATED"/>
    <property type="match status" value="1"/>
</dbReference>
<dbReference type="Pfam" id="PF01225">
    <property type="entry name" value="Mur_ligase"/>
    <property type="match status" value="1"/>
</dbReference>
<dbReference type="Pfam" id="PF02875">
    <property type="entry name" value="Mur_ligase_C"/>
    <property type="match status" value="1"/>
</dbReference>
<dbReference type="Pfam" id="PF08245">
    <property type="entry name" value="Mur_ligase_M"/>
    <property type="match status" value="1"/>
</dbReference>
<dbReference type="SUPFAM" id="SSF51984">
    <property type="entry name" value="MurCD N-terminal domain"/>
    <property type="match status" value="1"/>
</dbReference>
<dbReference type="SUPFAM" id="SSF53623">
    <property type="entry name" value="MurD-like peptide ligases, catalytic domain"/>
    <property type="match status" value="1"/>
</dbReference>
<dbReference type="SUPFAM" id="SSF53244">
    <property type="entry name" value="MurD-like peptide ligases, peptide-binding domain"/>
    <property type="match status" value="1"/>
</dbReference>
<keyword id="KW-0067">ATP-binding</keyword>
<keyword id="KW-0131">Cell cycle</keyword>
<keyword id="KW-0132">Cell division</keyword>
<keyword id="KW-0133">Cell shape</keyword>
<keyword id="KW-0961">Cell wall biogenesis/degradation</keyword>
<keyword id="KW-0963">Cytoplasm</keyword>
<keyword id="KW-0436">Ligase</keyword>
<keyword id="KW-0547">Nucleotide-binding</keyword>
<keyword id="KW-0573">Peptidoglycan synthesis</keyword>
<keyword id="KW-1185">Reference proteome</keyword>